<protein>
    <recommendedName>
        <fullName evidence="1">Large ribosomal subunit protein bL20c</fullName>
    </recommendedName>
    <alternativeName>
        <fullName evidence="2">50S ribosomal protein L20, chloroplastic</fullName>
    </alternativeName>
</protein>
<sequence length="116" mass="14038">MTRIKRGYIARRRRTKMHFFASSFRGAHSRLTRTMTQQEKRALVSAHRDRDRQKRDFRRLWITRINAVIRERGVSYSYSKFIHDLYKNQLLLNRKILAQIAISNRKCLDMISNEIV</sequence>
<organism>
    <name type="scientific">Ipomoea purpurea</name>
    <name type="common">Common morning glory</name>
    <name type="synonym">Pharbitis purpurea</name>
    <dbReference type="NCBI Taxonomy" id="4121"/>
    <lineage>
        <taxon>Eukaryota</taxon>
        <taxon>Viridiplantae</taxon>
        <taxon>Streptophyta</taxon>
        <taxon>Embryophyta</taxon>
        <taxon>Tracheophyta</taxon>
        <taxon>Spermatophyta</taxon>
        <taxon>Magnoliopsida</taxon>
        <taxon>eudicotyledons</taxon>
        <taxon>Gunneridae</taxon>
        <taxon>Pentapetalae</taxon>
        <taxon>asterids</taxon>
        <taxon>lamiids</taxon>
        <taxon>Solanales</taxon>
        <taxon>Convolvulaceae</taxon>
        <taxon>Ipomoeeae</taxon>
        <taxon>Ipomoea</taxon>
    </lineage>
</organism>
<reference key="1">
    <citation type="journal article" date="2007" name="BMC Plant Biol.">
        <title>Complete plastid genome sequences suggest strong selection for retention of photosynthetic genes in the parasitic plant genus Cuscuta.</title>
        <authorList>
            <person name="McNeal J.R."/>
            <person name="Kuehl J.V."/>
            <person name="Boore J.L."/>
            <person name="dePamphilis C.W."/>
        </authorList>
    </citation>
    <scope>NUCLEOTIDE SEQUENCE [LARGE SCALE GENOMIC DNA]</scope>
</reference>
<keyword id="KW-0150">Chloroplast</keyword>
<keyword id="KW-0934">Plastid</keyword>
<keyword id="KW-0687">Ribonucleoprotein</keyword>
<keyword id="KW-0689">Ribosomal protein</keyword>
<keyword id="KW-0694">RNA-binding</keyword>
<keyword id="KW-0699">rRNA-binding</keyword>
<name>RK20_IPOPU</name>
<proteinExistence type="inferred from homology"/>
<feature type="chain" id="PRO_0000355508" description="Large ribosomal subunit protein bL20c">
    <location>
        <begin position="1"/>
        <end position="116"/>
    </location>
</feature>
<accession>A7Y3G9</accession>
<evidence type="ECO:0000255" key="1">
    <source>
        <dbReference type="HAMAP-Rule" id="MF_00382"/>
    </source>
</evidence>
<evidence type="ECO:0000305" key="2"/>
<gene>
    <name evidence="1" type="primary">rpl20</name>
</gene>
<geneLocation type="chloroplast"/>
<comment type="function">
    <text evidence="1">Binds directly to 23S ribosomal RNA and is necessary for the in vitro assembly process of the 50S ribosomal subunit. It is not involved in the protein synthesizing functions of that subunit.</text>
</comment>
<comment type="subcellular location">
    <subcellularLocation>
        <location>Plastid</location>
        <location>Chloroplast</location>
    </subcellularLocation>
</comment>
<comment type="similarity">
    <text evidence="1">Belongs to the bacterial ribosomal protein bL20 family.</text>
</comment>
<dbReference type="EMBL" id="EU118126">
    <property type="protein sequence ID" value="ABV02371.1"/>
    <property type="molecule type" value="Genomic_DNA"/>
</dbReference>
<dbReference type="RefSeq" id="YP_001468331.1">
    <property type="nucleotide sequence ID" value="NC_009808.1"/>
</dbReference>
<dbReference type="SMR" id="A7Y3G9"/>
<dbReference type="GeneID" id="5601264"/>
<dbReference type="GO" id="GO:0009507">
    <property type="term" value="C:chloroplast"/>
    <property type="evidence" value="ECO:0007669"/>
    <property type="project" value="UniProtKB-SubCell"/>
</dbReference>
<dbReference type="GO" id="GO:1990904">
    <property type="term" value="C:ribonucleoprotein complex"/>
    <property type="evidence" value="ECO:0007669"/>
    <property type="project" value="UniProtKB-KW"/>
</dbReference>
<dbReference type="GO" id="GO:0005840">
    <property type="term" value="C:ribosome"/>
    <property type="evidence" value="ECO:0007669"/>
    <property type="project" value="UniProtKB-KW"/>
</dbReference>
<dbReference type="GO" id="GO:0019843">
    <property type="term" value="F:rRNA binding"/>
    <property type="evidence" value="ECO:0007669"/>
    <property type="project" value="UniProtKB-UniRule"/>
</dbReference>
<dbReference type="GO" id="GO:0003735">
    <property type="term" value="F:structural constituent of ribosome"/>
    <property type="evidence" value="ECO:0007669"/>
    <property type="project" value="InterPro"/>
</dbReference>
<dbReference type="GO" id="GO:0000027">
    <property type="term" value="P:ribosomal large subunit assembly"/>
    <property type="evidence" value="ECO:0007669"/>
    <property type="project" value="UniProtKB-UniRule"/>
</dbReference>
<dbReference type="GO" id="GO:0006412">
    <property type="term" value="P:translation"/>
    <property type="evidence" value="ECO:0007669"/>
    <property type="project" value="InterPro"/>
</dbReference>
<dbReference type="CDD" id="cd07026">
    <property type="entry name" value="Ribosomal_L20"/>
    <property type="match status" value="1"/>
</dbReference>
<dbReference type="FunFam" id="1.10.1900.20:FF:000001">
    <property type="entry name" value="50S ribosomal protein L20"/>
    <property type="match status" value="1"/>
</dbReference>
<dbReference type="Gene3D" id="6.10.160.10">
    <property type="match status" value="1"/>
</dbReference>
<dbReference type="Gene3D" id="1.10.1900.20">
    <property type="entry name" value="Ribosomal protein L20"/>
    <property type="match status" value="1"/>
</dbReference>
<dbReference type="HAMAP" id="MF_00382">
    <property type="entry name" value="Ribosomal_bL20"/>
    <property type="match status" value="1"/>
</dbReference>
<dbReference type="InterPro" id="IPR005813">
    <property type="entry name" value="Ribosomal_bL20"/>
</dbReference>
<dbReference type="InterPro" id="IPR049946">
    <property type="entry name" value="RIBOSOMAL_L20_CS"/>
</dbReference>
<dbReference type="InterPro" id="IPR035566">
    <property type="entry name" value="Ribosomal_protein_bL20_C"/>
</dbReference>
<dbReference type="NCBIfam" id="TIGR01032">
    <property type="entry name" value="rplT_bact"/>
    <property type="match status" value="1"/>
</dbReference>
<dbReference type="PANTHER" id="PTHR10986">
    <property type="entry name" value="39S RIBOSOMAL PROTEIN L20"/>
    <property type="match status" value="1"/>
</dbReference>
<dbReference type="Pfam" id="PF00453">
    <property type="entry name" value="Ribosomal_L20"/>
    <property type="match status" value="1"/>
</dbReference>
<dbReference type="PRINTS" id="PR00062">
    <property type="entry name" value="RIBOSOMALL20"/>
</dbReference>
<dbReference type="SUPFAM" id="SSF74731">
    <property type="entry name" value="Ribosomal protein L20"/>
    <property type="match status" value="1"/>
</dbReference>
<dbReference type="PROSITE" id="PS00937">
    <property type="entry name" value="RIBOSOMAL_L20"/>
    <property type="match status" value="1"/>
</dbReference>